<evidence type="ECO:0000250" key="1"/>
<evidence type="ECO:0000305" key="2"/>
<feature type="chain" id="PRO_0000285327" description="Protein dml1">
    <location>
        <begin position="1"/>
        <end position="499"/>
    </location>
</feature>
<protein>
    <recommendedName>
        <fullName>Protein dml1</fullName>
    </recommendedName>
</protein>
<comment type="function">
    <text evidence="1">Involved in the partitioning of the mitochondrial organelle and mitochondrial DNA (mtDNA) inheritance.</text>
</comment>
<comment type="subcellular location">
    <subcellularLocation>
        <location evidence="1">Mitochondrion</location>
    </subcellularLocation>
</comment>
<comment type="similarity">
    <text evidence="2">Belongs to the misato family.</text>
</comment>
<proteinExistence type="inferred from homology"/>
<dbReference type="EMBL" id="DS027059">
    <property type="protein sequence ID" value="EAW07322.1"/>
    <property type="molecule type" value="Genomic_DNA"/>
</dbReference>
<dbReference type="RefSeq" id="XP_001268748.1">
    <property type="nucleotide sequence ID" value="XM_001268747.1"/>
</dbReference>
<dbReference type="STRING" id="344612.A1CNV1"/>
<dbReference type="EnsemblFungi" id="EAW07322">
    <property type="protein sequence ID" value="EAW07322"/>
    <property type="gene ID" value="ACLA_020290"/>
</dbReference>
<dbReference type="GeneID" id="4701167"/>
<dbReference type="KEGG" id="act:ACLA_020290"/>
<dbReference type="VEuPathDB" id="FungiDB:ACLA_020290"/>
<dbReference type="eggNOG" id="KOG2530">
    <property type="taxonomic scope" value="Eukaryota"/>
</dbReference>
<dbReference type="HOGENOM" id="CLU_022511_2_0_1"/>
<dbReference type="OMA" id="SYETGWM"/>
<dbReference type="OrthoDB" id="271881at2759"/>
<dbReference type="Proteomes" id="UP000006701">
    <property type="component" value="Unassembled WGS sequence"/>
</dbReference>
<dbReference type="GO" id="GO:0005739">
    <property type="term" value="C:mitochondrion"/>
    <property type="evidence" value="ECO:0007669"/>
    <property type="project" value="UniProtKB-SubCell"/>
</dbReference>
<dbReference type="GO" id="GO:0007005">
    <property type="term" value="P:mitochondrion organization"/>
    <property type="evidence" value="ECO:0007669"/>
    <property type="project" value="InterPro"/>
</dbReference>
<dbReference type="CDD" id="cd06060">
    <property type="entry name" value="misato"/>
    <property type="match status" value="1"/>
</dbReference>
<dbReference type="Gene3D" id="3.40.50.1440">
    <property type="entry name" value="Tubulin/FtsZ, GTPase domain"/>
    <property type="match status" value="1"/>
</dbReference>
<dbReference type="InterPro" id="IPR049942">
    <property type="entry name" value="DML1/Misato"/>
</dbReference>
<dbReference type="InterPro" id="IPR029209">
    <property type="entry name" value="DML1/Misato_tubulin"/>
</dbReference>
<dbReference type="InterPro" id="IPR019605">
    <property type="entry name" value="Misato_II_tubulin-like"/>
</dbReference>
<dbReference type="InterPro" id="IPR036525">
    <property type="entry name" value="Tubulin/FtsZ_GTPase_sf"/>
</dbReference>
<dbReference type="PANTHER" id="PTHR13391">
    <property type="entry name" value="MITOCHONDRIAL DISTRIBUTION REGULATOR MISATO"/>
    <property type="match status" value="1"/>
</dbReference>
<dbReference type="PANTHER" id="PTHR13391:SF0">
    <property type="entry name" value="PROTEIN MISATO HOMOLOG 1"/>
    <property type="match status" value="1"/>
</dbReference>
<dbReference type="Pfam" id="PF10644">
    <property type="entry name" value="Misat_Tub_SegII"/>
    <property type="match status" value="1"/>
</dbReference>
<dbReference type="Pfam" id="PF14881">
    <property type="entry name" value="Tubulin_3"/>
    <property type="match status" value="1"/>
</dbReference>
<dbReference type="SUPFAM" id="SSF52490">
    <property type="entry name" value="Tubulin nucleotide-binding domain-like"/>
    <property type="match status" value="1"/>
</dbReference>
<reference key="1">
    <citation type="journal article" date="2008" name="PLoS Genet.">
        <title>Genomic islands in the pathogenic filamentous fungus Aspergillus fumigatus.</title>
        <authorList>
            <person name="Fedorova N.D."/>
            <person name="Khaldi N."/>
            <person name="Joardar V.S."/>
            <person name="Maiti R."/>
            <person name="Amedeo P."/>
            <person name="Anderson M.J."/>
            <person name="Crabtree J."/>
            <person name="Silva J.C."/>
            <person name="Badger J.H."/>
            <person name="Albarraq A."/>
            <person name="Angiuoli S."/>
            <person name="Bussey H."/>
            <person name="Bowyer P."/>
            <person name="Cotty P.J."/>
            <person name="Dyer P.S."/>
            <person name="Egan A."/>
            <person name="Galens K."/>
            <person name="Fraser-Liggett C.M."/>
            <person name="Haas B.J."/>
            <person name="Inman J.M."/>
            <person name="Kent R."/>
            <person name="Lemieux S."/>
            <person name="Malavazi I."/>
            <person name="Orvis J."/>
            <person name="Roemer T."/>
            <person name="Ronning C.M."/>
            <person name="Sundaram J.P."/>
            <person name="Sutton G."/>
            <person name="Turner G."/>
            <person name="Venter J.C."/>
            <person name="White O.R."/>
            <person name="Whitty B.R."/>
            <person name="Youngman P."/>
            <person name="Wolfe K.H."/>
            <person name="Goldman G.H."/>
            <person name="Wortman J.R."/>
            <person name="Jiang B."/>
            <person name="Denning D.W."/>
            <person name="Nierman W.C."/>
        </authorList>
    </citation>
    <scope>NUCLEOTIDE SEQUENCE [LARGE SCALE GENOMIC DNA]</scope>
    <source>
        <strain>ATCC 1007 / CBS 513.65 / DSM 816 / NCTC 3887 / NRRL 1 / QM 1276 / 107</strain>
    </source>
</reference>
<organism>
    <name type="scientific">Aspergillus clavatus (strain ATCC 1007 / CBS 513.65 / DSM 816 / NCTC 3887 / NRRL 1 / QM 1276 / 107)</name>
    <dbReference type="NCBI Taxonomy" id="344612"/>
    <lineage>
        <taxon>Eukaryota</taxon>
        <taxon>Fungi</taxon>
        <taxon>Dikarya</taxon>
        <taxon>Ascomycota</taxon>
        <taxon>Pezizomycotina</taxon>
        <taxon>Eurotiomycetes</taxon>
        <taxon>Eurotiomycetidae</taxon>
        <taxon>Eurotiales</taxon>
        <taxon>Aspergillaceae</taxon>
        <taxon>Aspergillus</taxon>
        <taxon>Aspergillus subgen. Fumigati</taxon>
    </lineage>
</organism>
<accession>A1CNV1</accession>
<keyword id="KW-0496">Mitochondrion</keyword>
<keyword id="KW-1185">Reference proteome</keyword>
<sequence>MHEIITLQLGQRANYLATHFWNLQESYFTYNEGEESPIDHDVHFRAGVGADGSETYTPRTLIYDLKGAFGTLRKQNALYELSTDSEYGQGLWDGKEVIQKQTPIIPSEYQLNLEQGLPAPALSSETVRYWSDYNRVFYHPRSIIQLNDYELNSKIMPFEDWDVGEDLFNDLDKEHDLLDRDVRPFAEECDQLRAFQLFAGSDDAWGGFAAKYLDRIRDEYGKKAVWVWAMEGGSKLQRRNQLKRDINKARSIHAMAPQSSLYVPIKDPPGHVPSTINLDAQSEWQTSALISSALETVTLPTRLRPYHDFETSLAGEDGMHKIFELQSTILPEDKTPTGAAGGNEASTEATSKVKTEFDMDFTYDDPQNRNSHIFNQVQITRGYSPVTDEASIREDLGLSRKKRFYNSEPMLESFYTPLAFPTLDSFPHNLFPVKESNAKINILASLTASSRTAGKLRAMEVVARRVVGVDERENLVNGLGEIRESYETGWMSDSDFDDD</sequence>
<gene>
    <name type="primary">dml1</name>
    <name type="ORF">ACLA_020290</name>
</gene>
<name>DML1_ASPCL</name>